<gene>
    <name evidence="1" type="primary">prmA</name>
    <name type="ordered locus">Cyan7425_3376</name>
</gene>
<sequence length="295" mass="32763">MVSSWWEIQVVGDAALEEGISWRLQSFGCQGTASQKQNHDCHMTGYLPQKQVNHLDLAALSLWLAQDAIALGFLPPTTRWKLINEEDWATSWQQYWHPQEVGDRLLIYPAWLDLPEHCERLLLRLDPGVAFGTGTHPTTQLCLEALEMHLDQTFGPVEQVTVADIGCGTGILSIAALRLGAKQAFAVDLDPLAVESADRSRDLNEIPPEQMIVQQGSVEQVPHPVQGIVCNILAETIIDLIPTLATISQPHTWAAFSGILVTQAKSVVDALEQQGWQVGSLWQRQDWCCINAHRL</sequence>
<protein>
    <recommendedName>
        <fullName evidence="1">Ribosomal protein L11 methyltransferase</fullName>
        <shortName evidence="1">L11 Mtase</shortName>
        <ecNumber evidence="1">2.1.1.-</ecNumber>
    </recommendedName>
</protein>
<comment type="function">
    <text evidence="1">Methylates ribosomal protein L11.</text>
</comment>
<comment type="catalytic activity">
    <reaction evidence="1">
        <text>L-lysyl-[protein] + 3 S-adenosyl-L-methionine = N(6),N(6),N(6)-trimethyl-L-lysyl-[protein] + 3 S-adenosyl-L-homocysteine + 3 H(+)</text>
        <dbReference type="Rhea" id="RHEA:54192"/>
        <dbReference type="Rhea" id="RHEA-COMP:9752"/>
        <dbReference type="Rhea" id="RHEA-COMP:13826"/>
        <dbReference type="ChEBI" id="CHEBI:15378"/>
        <dbReference type="ChEBI" id="CHEBI:29969"/>
        <dbReference type="ChEBI" id="CHEBI:57856"/>
        <dbReference type="ChEBI" id="CHEBI:59789"/>
        <dbReference type="ChEBI" id="CHEBI:61961"/>
    </reaction>
</comment>
<comment type="subcellular location">
    <subcellularLocation>
        <location evidence="1">Cytoplasm</location>
    </subcellularLocation>
</comment>
<comment type="similarity">
    <text evidence="1">Belongs to the methyltransferase superfamily. PrmA family.</text>
</comment>
<dbReference type="EC" id="2.1.1.-" evidence="1"/>
<dbReference type="EMBL" id="CP001344">
    <property type="protein sequence ID" value="ACL45700.1"/>
    <property type="molecule type" value="Genomic_DNA"/>
</dbReference>
<dbReference type="SMR" id="B8HPZ1"/>
<dbReference type="STRING" id="395961.Cyan7425_3376"/>
<dbReference type="KEGG" id="cyn:Cyan7425_3376"/>
<dbReference type="eggNOG" id="COG2264">
    <property type="taxonomic scope" value="Bacteria"/>
</dbReference>
<dbReference type="HOGENOM" id="CLU_049382_0_1_3"/>
<dbReference type="OrthoDB" id="9785995at2"/>
<dbReference type="GO" id="GO:0005737">
    <property type="term" value="C:cytoplasm"/>
    <property type="evidence" value="ECO:0007669"/>
    <property type="project" value="UniProtKB-SubCell"/>
</dbReference>
<dbReference type="GO" id="GO:0016279">
    <property type="term" value="F:protein-lysine N-methyltransferase activity"/>
    <property type="evidence" value="ECO:0007669"/>
    <property type="project" value="RHEA"/>
</dbReference>
<dbReference type="GO" id="GO:0032259">
    <property type="term" value="P:methylation"/>
    <property type="evidence" value="ECO:0007669"/>
    <property type="project" value="UniProtKB-KW"/>
</dbReference>
<dbReference type="CDD" id="cd02440">
    <property type="entry name" value="AdoMet_MTases"/>
    <property type="match status" value="1"/>
</dbReference>
<dbReference type="Gene3D" id="3.40.50.150">
    <property type="entry name" value="Vaccinia Virus protein VP39"/>
    <property type="match status" value="1"/>
</dbReference>
<dbReference type="HAMAP" id="MF_00735">
    <property type="entry name" value="Methyltr_PrmA"/>
    <property type="match status" value="1"/>
</dbReference>
<dbReference type="InterPro" id="IPR050078">
    <property type="entry name" value="Ribosomal_L11_MeTrfase_PrmA"/>
</dbReference>
<dbReference type="InterPro" id="IPR004498">
    <property type="entry name" value="Ribosomal_PrmA_MeTrfase"/>
</dbReference>
<dbReference type="InterPro" id="IPR029063">
    <property type="entry name" value="SAM-dependent_MTases_sf"/>
</dbReference>
<dbReference type="NCBIfam" id="TIGR00406">
    <property type="entry name" value="prmA"/>
    <property type="match status" value="1"/>
</dbReference>
<dbReference type="PANTHER" id="PTHR43648">
    <property type="entry name" value="ELECTRON TRANSFER FLAVOPROTEIN BETA SUBUNIT LYSINE METHYLTRANSFERASE"/>
    <property type="match status" value="1"/>
</dbReference>
<dbReference type="PANTHER" id="PTHR43648:SF1">
    <property type="entry name" value="ELECTRON TRANSFER FLAVOPROTEIN BETA SUBUNIT LYSINE METHYLTRANSFERASE"/>
    <property type="match status" value="1"/>
</dbReference>
<dbReference type="Pfam" id="PF06325">
    <property type="entry name" value="PrmA"/>
    <property type="match status" value="1"/>
</dbReference>
<dbReference type="PIRSF" id="PIRSF000401">
    <property type="entry name" value="RPL11_MTase"/>
    <property type="match status" value="1"/>
</dbReference>
<dbReference type="SUPFAM" id="SSF53335">
    <property type="entry name" value="S-adenosyl-L-methionine-dependent methyltransferases"/>
    <property type="match status" value="1"/>
</dbReference>
<accession>B8HPZ1</accession>
<feature type="chain" id="PRO_1000192613" description="Ribosomal protein L11 methyltransferase">
    <location>
        <begin position="1"/>
        <end position="295"/>
    </location>
</feature>
<feature type="binding site" evidence="1">
    <location>
        <position position="139"/>
    </location>
    <ligand>
        <name>S-adenosyl-L-methionine</name>
        <dbReference type="ChEBI" id="CHEBI:59789"/>
    </ligand>
</feature>
<feature type="binding site" evidence="1">
    <location>
        <position position="166"/>
    </location>
    <ligand>
        <name>S-adenosyl-L-methionine</name>
        <dbReference type="ChEBI" id="CHEBI:59789"/>
    </ligand>
</feature>
<feature type="binding site" evidence="1">
    <location>
        <position position="188"/>
    </location>
    <ligand>
        <name>S-adenosyl-L-methionine</name>
        <dbReference type="ChEBI" id="CHEBI:59789"/>
    </ligand>
</feature>
<feature type="binding site" evidence="1">
    <location>
        <position position="231"/>
    </location>
    <ligand>
        <name>S-adenosyl-L-methionine</name>
        <dbReference type="ChEBI" id="CHEBI:59789"/>
    </ligand>
</feature>
<organism>
    <name type="scientific">Cyanothece sp. (strain PCC 7425 / ATCC 29141)</name>
    <dbReference type="NCBI Taxonomy" id="395961"/>
    <lineage>
        <taxon>Bacteria</taxon>
        <taxon>Bacillati</taxon>
        <taxon>Cyanobacteriota</taxon>
        <taxon>Cyanophyceae</taxon>
        <taxon>Gomontiellales</taxon>
        <taxon>Cyanothecaceae</taxon>
        <taxon>Cyanothece</taxon>
    </lineage>
</organism>
<name>PRMA_CYAP4</name>
<proteinExistence type="inferred from homology"/>
<keyword id="KW-0963">Cytoplasm</keyword>
<keyword id="KW-0489">Methyltransferase</keyword>
<keyword id="KW-0949">S-adenosyl-L-methionine</keyword>
<keyword id="KW-0808">Transferase</keyword>
<reference key="1">
    <citation type="journal article" date="2011" name="MBio">
        <title>Novel metabolic attributes of the genus Cyanothece, comprising a group of unicellular nitrogen-fixing Cyanobacteria.</title>
        <authorList>
            <person name="Bandyopadhyay A."/>
            <person name="Elvitigala T."/>
            <person name="Welsh E."/>
            <person name="Stockel J."/>
            <person name="Liberton M."/>
            <person name="Min H."/>
            <person name="Sherman L.A."/>
            <person name="Pakrasi H.B."/>
        </authorList>
    </citation>
    <scope>NUCLEOTIDE SEQUENCE [LARGE SCALE GENOMIC DNA]</scope>
    <source>
        <strain>PCC 7425 / ATCC 29141</strain>
    </source>
</reference>
<evidence type="ECO:0000255" key="1">
    <source>
        <dbReference type="HAMAP-Rule" id="MF_00735"/>
    </source>
</evidence>